<sequence length="246" mass="28375">MLKVLVVDDEMLARDELKYLLERTKEVEIIGEADCVEDALEELMKNKPDIVFLDIQLSDDNGFEIANILKKMKNPPAIVFATAYDQYALQAFEVDALDYILKPFDEERIVQTLKKYKKQKQSQIEMKQEIKGADVTAEMHKLALPIEESIVLVNIEDIVYVGLVDGKVTVKTVRETYVTHDTLVILEKKLPQASFMRVHRSFIANINHITEIQPWFNSTYNLIMKEGSKVPVSRTYAKELKKLLRI</sequence>
<name>LYTT_BACAN</name>
<protein>
    <recommendedName>
        <fullName>Sensory transduction protein LytT</fullName>
    </recommendedName>
</protein>
<proteinExistence type="inferred from homology"/>
<gene>
    <name type="primary">lytT</name>
    <name type="ordered locus">BA_5691</name>
    <name type="ordered locus">GBAA_5691</name>
    <name type="ordered locus">BAS5295</name>
</gene>
<organism>
    <name type="scientific">Bacillus anthracis</name>
    <dbReference type="NCBI Taxonomy" id="1392"/>
    <lineage>
        <taxon>Bacteria</taxon>
        <taxon>Bacillati</taxon>
        <taxon>Bacillota</taxon>
        <taxon>Bacilli</taxon>
        <taxon>Bacillales</taxon>
        <taxon>Bacillaceae</taxon>
        <taxon>Bacillus</taxon>
        <taxon>Bacillus cereus group</taxon>
    </lineage>
</organism>
<reference key="1">
    <citation type="journal article" date="2003" name="Nature">
        <title>The genome sequence of Bacillus anthracis Ames and comparison to closely related bacteria.</title>
        <authorList>
            <person name="Read T.D."/>
            <person name="Peterson S.N."/>
            <person name="Tourasse N.J."/>
            <person name="Baillie L.W."/>
            <person name="Paulsen I.T."/>
            <person name="Nelson K.E."/>
            <person name="Tettelin H."/>
            <person name="Fouts D.E."/>
            <person name="Eisen J.A."/>
            <person name="Gill S.R."/>
            <person name="Holtzapple E.K."/>
            <person name="Okstad O.A."/>
            <person name="Helgason E."/>
            <person name="Rilstone J."/>
            <person name="Wu M."/>
            <person name="Kolonay J.F."/>
            <person name="Beanan M.J."/>
            <person name="Dodson R.J."/>
            <person name="Brinkac L.M."/>
            <person name="Gwinn M.L."/>
            <person name="DeBoy R.T."/>
            <person name="Madpu R."/>
            <person name="Daugherty S.C."/>
            <person name="Durkin A.S."/>
            <person name="Haft D.H."/>
            <person name="Nelson W.C."/>
            <person name="Peterson J.D."/>
            <person name="Pop M."/>
            <person name="Khouri H.M."/>
            <person name="Radune D."/>
            <person name="Benton J.L."/>
            <person name="Mahamoud Y."/>
            <person name="Jiang L."/>
            <person name="Hance I.R."/>
            <person name="Weidman J.F."/>
            <person name="Berry K.J."/>
            <person name="Plaut R.D."/>
            <person name="Wolf A.M."/>
            <person name="Watkins K.L."/>
            <person name="Nierman W.C."/>
            <person name="Hazen A."/>
            <person name="Cline R.T."/>
            <person name="Redmond C."/>
            <person name="Thwaite J.E."/>
            <person name="White O."/>
            <person name="Salzberg S.L."/>
            <person name="Thomason B."/>
            <person name="Friedlander A.M."/>
            <person name="Koehler T.M."/>
            <person name="Hanna P.C."/>
            <person name="Kolstoe A.-B."/>
            <person name="Fraser C.M."/>
        </authorList>
    </citation>
    <scope>NUCLEOTIDE SEQUENCE [LARGE SCALE GENOMIC DNA]</scope>
    <source>
        <strain>Ames / isolate Porton</strain>
    </source>
</reference>
<reference key="2">
    <citation type="journal article" date="2009" name="J. Bacteriol.">
        <title>The complete genome sequence of Bacillus anthracis Ames 'Ancestor'.</title>
        <authorList>
            <person name="Ravel J."/>
            <person name="Jiang L."/>
            <person name="Stanley S.T."/>
            <person name="Wilson M.R."/>
            <person name="Decker R.S."/>
            <person name="Read T.D."/>
            <person name="Worsham P."/>
            <person name="Keim P.S."/>
            <person name="Salzberg S.L."/>
            <person name="Fraser-Liggett C.M."/>
            <person name="Rasko D.A."/>
        </authorList>
    </citation>
    <scope>NUCLEOTIDE SEQUENCE [LARGE SCALE GENOMIC DNA]</scope>
    <source>
        <strain>Ames ancestor</strain>
    </source>
</reference>
<reference key="3">
    <citation type="submission" date="2004-01" db="EMBL/GenBank/DDBJ databases">
        <title>Complete genome sequence of Bacillus anthracis Sterne.</title>
        <authorList>
            <person name="Brettin T.S."/>
            <person name="Bruce D."/>
            <person name="Challacombe J.F."/>
            <person name="Gilna P."/>
            <person name="Han C."/>
            <person name="Hill K."/>
            <person name="Hitchcock P."/>
            <person name="Jackson P."/>
            <person name="Keim P."/>
            <person name="Longmire J."/>
            <person name="Lucas S."/>
            <person name="Okinaka R."/>
            <person name="Richardson P."/>
            <person name="Rubin E."/>
            <person name="Tice H."/>
        </authorList>
    </citation>
    <scope>NUCLEOTIDE SEQUENCE [LARGE SCALE GENOMIC DNA]</scope>
    <source>
        <strain>Sterne</strain>
    </source>
</reference>
<dbReference type="EMBL" id="AE016879">
    <property type="protein sequence ID" value="AAP29323.1"/>
    <property type="molecule type" value="Genomic_DNA"/>
</dbReference>
<dbReference type="EMBL" id="AE017334">
    <property type="protein sequence ID" value="AAT35470.1"/>
    <property type="molecule type" value="Genomic_DNA"/>
</dbReference>
<dbReference type="EMBL" id="AE017225">
    <property type="protein sequence ID" value="AAT57582.1"/>
    <property type="molecule type" value="Genomic_DNA"/>
</dbReference>
<dbReference type="RefSeq" id="NP_847837.1">
    <property type="nucleotide sequence ID" value="NC_003997.3"/>
</dbReference>
<dbReference type="RefSeq" id="WP_000921829.1">
    <property type="nucleotide sequence ID" value="NZ_WXXJ01000017.1"/>
</dbReference>
<dbReference type="RefSeq" id="YP_031532.1">
    <property type="nucleotide sequence ID" value="NC_005945.1"/>
</dbReference>
<dbReference type="SMR" id="Q81JL3"/>
<dbReference type="STRING" id="261594.GBAA_5691"/>
<dbReference type="DNASU" id="1085431"/>
<dbReference type="GeneID" id="45025266"/>
<dbReference type="KEGG" id="ban:BA_5691"/>
<dbReference type="KEGG" id="bar:GBAA_5691"/>
<dbReference type="KEGG" id="bat:BAS5295"/>
<dbReference type="PATRIC" id="fig|198094.11.peg.5653"/>
<dbReference type="eggNOG" id="COG3279">
    <property type="taxonomic scope" value="Bacteria"/>
</dbReference>
<dbReference type="HOGENOM" id="CLU_000445_14_1_9"/>
<dbReference type="OMA" id="HEDFAVQ"/>
<dbReference type="OrthoDB" id="9809318at2"/>
<dbReference type="Proteomes" id="UP000000427">
    <property type="component" value="Chromosome"/>
</dbReference>
<dbReference type="Proteomes" id="UP000000594">
    <property type="component" value="Chromosome"/>
</dbReference>
<dbReference type="GO" id="GO:0005737">
    <property type="term" value="C:cytoplasm"/>
    <property type="evidence" value="ECO:0007669"/>
    <property type="project" value="UniProtKB-SubCell"/>
</dbReference>
<dbReference type="GO" id="GO:0003677">
    <property type="term" value="F:DNA binding"/>
    <property type="evidence" value="ECO:0007669"/>
    <property type="project" value="UniProtKB-KW"/>
</dbReference>
<dbReference type="GO" id="GO:0000156">
    <property type="term" value="F:phosphorelay response regulator activity"/>
    <property type="evidence" value="ECO:0007669"/>
    <property type="project" value="InterPro"/>
</dbReference>
<dbReference type="CDD" id="cd17532">
    <property type="entry name" value="REC_LytTR_AlgR-like"/>
    <property type="match status" value="1"/>
</dbReference>
<dbReference type="FunFam" id="3.40.50.2300:FF:000134">
    <property type="entry name" value="Autolysin response regulator LytR"/>
    <property type="match status" value="1"/>
</dbReference>
<dbReference type="FunFam" id="2.40.50.40:FF:000027">
    <property type="entry name" value="DNA-binding response regulator"/>
    <property type="match status" value="1"/>
</dbReference>
<dbReference type="FunFam" id="2.20.25.10:FF:000010">
    <property type="entry name" value="Two-component system response regulator"/>
    <property type="match status" value="1"/>
</dbReference>
<dbReference type="Gene3D" id="2.20.25.10">
    <property type="match status" value="1"/>
</dbReference>
<dbReference type="Gene3D" id="2.40.50.40">
    <property type="match status" value="1"/>
</dbReference>
<dbReference type="Gene3D" id="3.40.50.2300">
    <property type="match status" value="1"/>
</dbReference>
<dbReference type="InterPro" id="IPR011006">
    <property type="entry name" value="CheY-like_superfamily"/>
</dbReference>
<dbReference type="InterPro" id="IPR046947">
    <property type="entry name" value="LytR-like"/>
</dbReference>
<dbReference type="InterPro" id="IPR007492">
    <property type="entry name" value="LytTR_DNA-bd_dom"/>
</dbReference>
<dbReference type="InterPro" id="IPR001789">
    <property type="entry name" value="Sig_transdc_resp-reg_receiver"/>
</dbReference>
<dbReference type="PANTHER" id="PTHR37299:SF1">
    <property type="entry name" value="STAGE 0 SPORULATION PROTEIN A HOMOLOG"/>
    <property type="match status" value="1"/>
</dbReference>
<dbReference type="PANTHER" id="PTHR37299">
    <property type="entry name" value="TRANSCRIPTIONAL REGULATOR-RELATED"/>
    <property type="match status" value="1"/>
</dbReference>
<dbReference type="Pfam" id="PF04397">
    <property type="entry name" value="LytTR"/>
    <property type="match status" value="1"/>
</dbReference>
<dbReference type="Pfam" id="PF00072">
    <property type="entry name" value="Response_reg"/>
    <property type="match status" value="1"/>
</dbReference>
<dbReference type="SMART" id="SM00850">
    <property type="entry name" value="LytTR"/>
    <property type="match status" value="1"/>
</dbReference>
<dbReference type="SMART" id="SM00448">
    <property type="entry name" value="REC"/>
    <property type="match status" value="1"/>
</dbReference>
<dbReference type="SUPFAM" id="SSF52172">
    <property type="entry name" value="CheY-like"/>
    <property type="match status" value="1"/>
</dbReference>
<dbReference type="PROSITE" id="PS50930">
    <property type="entry name" value="HTH_LYTTR"/>
    <property type="match status" value="1"/>
</dbReference>
<dbReference type="PROSITE" id="PS50110">
    <property type="entry name" value="RESPONSE_REGULATORY"/>
    <property type="match status" value="1"/>
</dbReference>
<accession>Q81JL3</accession>
<accession>Q6HQ56</accession>
<accession>Q6KIV1</accession>
<feature type="chain" id="PRO_0000081121" description="Sensory transduction protein LytT">
    <location>
        <begin position="1"/>
        <end position="246"/>
    </location>
</feature>
<feature type="domain" description="Response regulatory" evidence="2">
    <location>
        <begin position="3"/>
        <end position="117"/>
    </location>
</feature>
<feature type="domain" description="HTH LytTR-type" evidence="1">
    <location>
        <begin position="142"/>
        <end position="246"/>
    </location>
</feature>
<feature type="modified residue" description="4-aspartylphosphate" evidence="2">
    <location>
        <position position="54"/>
    </location>
</feature>
<evidence type="ECO:0000255" key="1">
    <source>
        <dbReference type="PROSITE-ProRule" id="PRU00112"/>
    </source>
</evidence>
<evidence type="ECO:0000255" key="2">
    <source>
        <dbReference type="PROSITE-ProRule" id="PRU00169"/>
    </source>
</evidence>
<evidence type="ECO:0000305" key="3"/>
<keyword id="KW-0963">Cytoplasm</keyword>
<keyword id="KW-0238">DNA-binding</keyword>
<keyword id="KW-0597">Phosphoprotein</keyword>
<keyword id="KW-1185">Reference proteome</keyword>
<keyword id="KW-0804">Transcription</keyword>
<keyword id="KW-0805">Transcription regulation</keyword>
<keyword id="KW-0902">Two-component regulatory system</keyword>
<comment type="function">
    <text>Member of the two-component regulatory system LytS/LytT that probably regulates genes involved in cell wall metabolism.</text>
</comment>
<comment type="subcellular location">
    <subcellularLocation>
        <location evidence="3">Cytoplasm</location>
    </subcellularLocation>
</comment>
<comment type="PTM">
    <text evidence="3">Phosphorylated by LytS.</text>
</comment>